<dbReference type="EMBL" id="AB019229">
    <property type="status" value="NOT_ANNOTATED_CDS"/>
    <property type="molecule type" value="Genomic_DNA"/>
</dbReference>
<dbReference type="EMBL" id="CP002686">
    <property type="protein sequence ID" value="AEE75435.2"/>
    <property type="status" value="ALT_SEQ"/>
    <property type="molecule type" value="Genomic_DNA"/>
</dbReference>
<dbReference type="EMBL" id="AB499312">
    <property type="protein sequence ID" value="BAH58782.1"/>
    <property type="molecule type" value="mRNA"/>
</dbReference>
<dbReference type="RefSeq" id="NP_001319546.1">
    <property type="nucleotide sequence ID" value="NM_001338088.1"/>
</dbReference>
<dbReference type="SMR" id="C4B8C4"/>
<dbReference type="STRING" id="3702.C4B8C4"/>
<dbReference type="PaxDb" id="3702-AT3G13898.1"/>
<dbReference type="GeneID" id="10723043"/>
<dbReference type="KEGG" id="ath:AT3G13898"/>
<dbReference type="Araport" id="AT3G13898"/>
<dbReference type="TAIR" id="AT3G13898">
    <property type="gene designation" value="EPFL3"/>
</dbReference>
<dbReference type="eggNOG" id="ENOG502S87E">
    <property type="taxonomic scope" value="Eukaryota"/>
</dbReference>
<dbReference type="HOGENOM" id="CLU_135272_0_0_1"/>
<dbReference type="InParanoid" id="C4B8C4"/>
<dbReference type="PRO" id="PR:C4B8C4"/>
<dbReference type="Proteomes" id="UP000006548">
    <property type="component" value="Chromosome 3"/>
</dbReference>
<dbReference type="ExpressionAtlas" id="C4B8C4">
    <property type="expression patterns" value="baseline and differential"/>
</dbReference>
<dbReference type="GO" id="GO:0005576">
    <property type="term" value="C:extracellular region"/>
    <property type="evidence" value="ECO:0007669"/>
    <property type="project" value="UniProtKB-SubCell"/>
</dbReference>
<dbReference type="GO" id="GO:0010052">
    <property type="term" value="P:guard cell differentiation"/>
    <property type="evidence" value="ECO:0000250"/>
    <property type="project" value="UniProtKB"/>
</dbReference>
<dbReference type="GO" id="GO:0010374">
    <property type="term" value="P:stomatal complex development"/>
    <property type="evidence" value="ECO:0000250"/>
    <property type="project" value="UniProtKB"/>
</dbReference>
<dbReference type="InterPro" id="IPR039455">
    <property type="entry name" value="EPFL"/>
</dbReference>
<dbReference type="PANTHER" id="PTHR33109:SF96">
    <property type="entry name" value="EPIDERMAL PATTERNING FACTOR-LIKE PROTEIN 3"/>
    <property type="match status" value="1"/>
</dbReference>
<dbReference type="PANTHER" id="PTHR33109">
    <property type="entry name" value="EPIDERMAL PATTERNING FACTOR-LIKE PROTEIN 4"/>
    <property type="match status" value="1"/>
</dbReference>
<dbReference type="Pfam" id="PF17181">
    <property type="entry name" value="EPF"/>
    <property type="match status" value="1"/>
</dbReference>
<sequence length="107" mass="12512">MEYMFLLMSKFFFVFPIIIYIGPAEIIKPQAAEENSRRRILNPNENKEEIVKRRRRIGSKPPSCEKKCYGCEPCEAIQFPTISSIPHLSPHYANYQPEGWRCHCPPP</sequence>
<organism>
    <name type="scientific">Arabidopsis thaliana</name>
    <name type="common">Mouse-ear cress</name>
    <dbReference type="NCBI Taxonomy" id="3702"/>
    <lineage>
        <taxon>Eukaryota</taxon>
        <taxon>Viridiplantae</taxon>
        <taxon>Streptophyta</taxon>
        <taxon>Embryophyta</taxon>
        <taxon>Tracheophyta</taxon>
        <taxon>Spermatophyta</taxon>
        <taxon>Magnoliopsida</taxon>
        <taxon>eudicotyledons</taxon>
        <taxon>Gunneridae</taxon>
        <taxon>Pentapetalae</taxon>
        <taxon>rosids</taxon>
        <taxon>malvids</taxon>
        <taxon>Brassicales</taxon>
        <taxon>Brassicaceae</taxon>
        <taxon>Camelineae</taxon>
        <taxon>Arabidopsis</taxon>
    </lineage>
</organism>
<gene>
    <name evidence="3" type="primary">EPFL3</name>
    <name evidence="6" type="ordered locus">At3g13898</name>
    <name type="ORF">MDC16</name>
</gene>
<name>EPFL3_ARATH</name>
<keyword id="KW-0217">Developmental protein</keyword>
<keyword id="KW-1015">Disulfide bond</keyword>
<keyword id="KW-1185">Reference proteome</keyword>
<keyword id="KW-0964">Secreted</keyword>
<keyword id="KW-0732">Signal</keyword>
<evidence type="ECO:0000250" key="1"/>
<evidence type="ECO:0000255" key="2"/>
<evidence type="ECO:0000303" key="3">
    <source>
    </source>
</evidence>
<evidence type="ECO:0000303" key="4">
    <source>
    </source>
</evidence>
<evidence type="ECO:0000305" key="5"/>
<evidence type="ECO:0000312" key="6">
    <source>
        <dbReference type="Araport" id="AT3G13898"/>
    </source>
</evidence>
<reference key="1">
    <citation type="journal article" date="2000" name="DNA Res.">
        <title>Structural analysis of Arabidopsis thaliana chromosome 3. I. Sequence features of the regions of 4,504,864 bp covered by sixty P1 and TAC clones.</title>
        <authorList>
            <person name="Sato S."/>
            <person name="Nakamura Y."/>
            <person name="Kaneko T."/>
            <person name="Katoh T."/>
            <person name="Asamizu E."/>
            <person name="Tabata S."/>
        </authorList>
    </citation>
    <scope>NUCLEOTIDE SEQUENCE [LARGE SCALE GENOMIC DNA]</scope>
    <source>
        <strain>cv. Columbia</strain>
    </source>
</reference>
<reference key="2">
    <citation type="journal article" date="2017" name="Plant J.">
        <title>Araport11: a complete reannotation of the Arabidopsis thaliana reference genome.</title>
        <authorList>
            <person name="Cheng C.Y."/>
            <person name="Krishnakumar V."/>
            <person name="Chan A.P."/>
            <person name="Thibaud-Nissen F."/>
            <person name="Schobel S."/>
            <person name="Town C.D."/>
        </authorList>
    </citation>
    <scope>GENOME REANNOTATION</scope>
    <source>
        <strain>cv. Columbia</strain>
    </source>
</reference>
<reference key="3">
    <citation type="journal article" date="2009" name="Plant Cell Physiol.">
        <title>Epidermal cell density is autoregulated via a secretory peptide, EPIDERMAL PATTERNING FACTOR 2 in Arabidopsis leaves.</title>
        <authorList>
            <person name="Hara K."/>
            <person name="Yokoo T."/>
            <person name="Kajita R."/>
            <person name="Onishi T."/>
            <person name="Yahata S."/>
            <person name="Peterson K.M."/>
            <person name="Torii K.U."/>
            <person name="Kakimoto T."/>
        </authorList>
    </citation>
    <scope>NUCLEOTIDE SEQUENCE [MRNA]</scope>
    <scope>GENE FAMILY</scope>
    <scope>NOMENCLATURE</scope>
</reference>
<reference key="4">
    <citation type="journal article" date="2011" name="Nat. Commun.">
        <title>The NMR structure of stomagen reveals the basis of stomatal density regulation by plant peptide hormones.</title>
        <authorList>
            <person name="Ohki S."/>
            <person name="Takeuchi M."/>
            <person name="Mori M."/>
        </authorList>
    </citation>
    <scope>3D-STRUCTURE MODELING</scope>
    <scope>DISULFIDE BOND</scope>
</reference>
<accession>C4B8C4</accession>
<accession>A0A2H1ZEI3</accession>
<proteinExistence type="evidence at protein level"/>
<feature type="signal peptide" evidence="2">
    <location>
        <begin position="1"/>
        <end position="24"/>
    </location>
</feature>
<feature type="chain" id="PRO_0000392501" description="EPIDERMAL PATTERNING FACTOR-like protein 3">
    <location>
        <begin position="25"/>
        <end position="107"/>
    </location>
</feature>
<feature type="chain" id="PRO_0000430509" description="MEPFL3" evidence="4">
    <location>
        <begin position="57"/>
        <end position="107"/>
    </location>
</feature>
<feature type="disulfide bond" evidence="4">
    <location>
        <begin position="64"/>
        <end position="102"/>
    </location>
</feature>
<feature type="disulfide bond" evidence="4">
    <location>
        <begin position="68"/>
        <end position="74"/>
    </location>
</feature>
<feature type="disulfide bond" evidence="4">
    <location>
        <begin position="71"/>
        <end position="104"/>
    </location>
</feature>
<comment type="function">
    <text evidence="1">Controls stomatal patterning.</text>
</comment>
<comment type="subcellular location">
    <subcellularLocation>
        <location evidence="5">Secreted</location>
    </subcellularLocation>
</comment>
<comment type="similarity">
    <text evidence="5">Belongs to the plant cysteine rich small secretory peptide family. Epidermal patterning factor subfamily.</text>
</comment>
<comment type="sequence caution" evidence="5">
    <conflict type="erroneous gene model prediction">
        <sequence resource="EMBL-CDS" id="AEE75435"/>
    </conflict>
</comment>
<protein>
    <recommendedName>
        <fullName>EPIDERMAL PATTERNING FACTOR-like protein 3</fullName>
        <shortName>EPF-like protein 3</shortName>
    </recommendedName>
    <component>
        <recommendedName>
            <fullName evidence="5">MEPFL3</fullName>
        </recommendedName>
    </component>
</protein>